<dbReference type="EMBL" id="AB009844">
    <property type="protein sequence ID" value="BAA24088.1"/>
    <property type="molecule type" value="mRNA"/>
</dbReference>
<dbReference type="PIR" id="T10177">
    <property type="entry name" value="T10177"/>
</dbReference>
<dbReference type="SMR" id="O48665"/>
<dbReference type="OrthoDB" id="2012505at2759"/>
<dbReference type="GO" id="GO:0005829">
    <property type="term" value="C:cytosol"/>
    <property type="evidence" value="ECO:0007669"/>
    <property type="project" value="UniProtKB-SubCell"/>
</dbReference>
<dbReference type="GO" id="GO:0005634">
    <property type="term" value="C:nucleus"/>
    <property type="evidence" value="ECO:0007669"/>
    <property type="project" value="UniProtKB-SubCell"/>
</dbReference>
<dbReference type="GO" id="GO:0020037">
    <property type="term" value="F:heme binding"/>
    <property type="evidence" value="ECO:0007669"/>
    <property type="project" value="InterPro"/>
</dbReference>
<dbReference type="GO" id="GO:0046872">
    <property type="term" value="F:metal ion binding"/>
    <property type="evidence" value="ECO:0007669"/>
    <property type="project" value="UniProtKB-KW"/>
</dbReference>
<dbReference type="GO" id="GO:0019825">
    <property type="term" value="F:oxygen binding"/>
    <property type="evidence" value="ECO:0007669"/>
    <property type="project" value="InterPro"/>
</dbReference>
<dbReference type="GO" id="GO:0005344">
    <property type="term" value="F:oxygen carrier activity"/>
    <property type="evidence" value="ECO:0007669"/>
    <property type="project" value="UniProtKB-KW"/>
</dbReference>
<dbReference type="GO" id="GO:0009877">
    <property type="term" value="P:nodulation"/>
    <property type="evidence" value="ECO:0007669"/>
    <property type="project" value="UniProtKB-KW"/>
</dbReference>
<dbReference type="GO" id="GO:0009737">
    <property type="term" value="P:response to abscisic acid"/>
    <property type="evidence" value="ECO:0000270"/>
    <property type="project" value="UniProtKB"/>
</dbReference>
<dbReference type="Gene3D" id="1.10.490.10">
    <property type="entry name" value="Globins"/>
    <property type="match status" value="1"/>
</dbReference>
<dbReference type="InterPro" id="IPR000971">
    <property type="entry name" value="Globin"/>
</dbReference>
<dbReference type="InterPro" id="IPR009050">
    <property type="entry name" value="Globin-like_sf"/>
</dbReference>
<dbReference type="InterPro" id="IPR012292">
    <property type="entry name" value="Globin/Proto"/>
</dbReference>
<dbReference type="InterPro" id="IPR001032">
    <property type="entry name" value="Leghaemoglobin-like"/>
</dbReference>
<dbReference type="InterPro" id="IPR019824">
    <property type="entry name" value="Leghaemoglobin_Fe_BS"/>
</dbReference>
<dbReference type="PANTHER" id="PTHR22924">
    <property type="entry name" value="LEGHEMOGLOBIN-RELATED"/>
    <property type="match status" value="1"/>
</dbReference>
<dbReference type="PANTHER" id="PTHR22924:SF92">
    <property type="entry name" value="NON-SYMBIOTIC HEMOGLOBIN 2"/>
    <property type="match status" value="1"/>
</dbReference>
<dbReference type="Pfam" id="PF00042">
    <property type="entry name" value="Globin"/>
    <property type="match status" value="1"/>
</dbReference>
<dbReference type="PRINTS" id="PR00188">
    <property type="entry name" value="PLANTGLOBIN"/>
</dbReference>
<dbReference type="SUPFAM" id="SSF46458">
    <property type="entry name" value="Globin-like"/>
    <property type="match status" value="1"/>
</dbReference>
<dbReference type="PROSITE" id="PS01033">
    <property type="entry name" value="GLOBIN"/>
    <property type="match status" value="1"/>
</dbReference>
<dbReference type="PROSITE" id="PS00208">
    <property type="entry name" value="PLANT_GLOBIN"/>
    <property type="match status" value="1"/>
</dbReference>
<comment type="function">
    <text evidence="3 6">Leghemoglobin that reversibly binds oxygen O(2) through a pentacoordinated heme iron (By similarity). In root nodules, facilitates the diffusion of oxygen to the bacteroids while preventing the bacterial nitrogenase from being inactivated by buffering dioxygen, nitric oxide and carbon monoxide, and promoting the formation of reactive oxygen species (ROS, e.g. H(2)O(2)) (By similarity). This role is essential for symbiotic nitrogen fixation (SNF) (By similarity).</text>
</comment>
<comment type="subunit">
    <text evidence="4">Monomer.</text>
</comment>
<comment type="subcellular location">
    <subcellularLocation>
        <location evidence="4">Cytoplasm</location>
        <location evidence="4">Cytosol</location>
    </subcellularLocation>
    <subcellularLocation>
        <location evidence="4">Nucleus</location>
    </subcellularLocation>
</comment>
<comment type="tissue specificity">
    <text evidence="8">Root nodules.</text>
</comment>
<comment type="induction">
    <text evidence="9 10">Strongly reduced levels in boron-deficient nodules (PubMed:20132519). Inhibited by abscisic acid (ABA) in parallel with lower nitrogen fixation in nodules (PubMed:11283173).</text>
</comment>
<comment type="PTM">
    <text evidence="2">Nitrated in effective nodules and particularly in hypoxic conditions; this mechanism may play a protective role in the symbiosis by buffering toxic peroxynitrite NO(2)(-). Nitration level decrease during nodule senescence.</text>
</comment>
<comment type="PTM">
    <text evidence="5">Phosphorylation at Ser-44 disrupts the molecular environment of its porphyrin ring oxygen binding pocket, thus leading to a reduced oxygen consumption and to the delivery of oxygen O(2) to symbiosomes.</text>
</comment>
<comment type="similarity">
    <text evidence="12">Belongs to the plant globin family.</text>
</comment>
<accession>O48665</accession>
<feature type="initiator methionine" description="Removed" evidence="1">
    <location>
        <position position="1"/>
    </location>
</feature>
<feature type="chain" id="PRO_0000192995" description="Leghemoglobin Lb120-29">
    <location>
        <begin position="2"/>
        <end position="146"/>
    </location>
</feature>
<feature type="domain" description="Globin" evidence="7">
    <location>
        <begin position="2"/>
        <end position="146"/>
    </location>
</feature>
<feature type="binding site" evidence="4">
    <location>
        <position position="44"/>
    </location>
    <ligand>
        <name>heme b</name>
        <dbReference type="ChEBI" id="CHEBI:60344"/>
    </ligand>
</feature>
<feature type="binding site" evidence="4">
    <location>
        <position position="61"/>
    </location>
    <ligand>
        <name>O2</name>
        <dbReference type="ChEBI" id="CHEBI:15379"/>
    </ligand>
</feature>
<feature type="binding site" evidence="4">
    <location>
        <position position="64"/>
    </location>
    <ligand>
        <name>heme b</name>
        <dbReference type="ChEBI" id="CHEBI:60344"/>
    </ligand>
</feature>
<feature type="binding site" description="proximal binding residue" evidence="7">
    <location>
        <position position="93"/>
    </location>
    <ligand>
        <name>heme b</name>
        <dbReference type="ChEBI" id="CHEBI:60344"/>
    </ligand>
    <ligandPart>
        <name>Fe</name>
        <dbReference type="ChEBI" id="CHEBI:18248"/>
    </ligandPart>
</feature>
<feature type="binding site" evidence="4">
    <location>
        <position position="96"/>
    </location>
    <ligand>
        <name>heme b</name>
        <dbReference type="ChEBI" id="CHEBI:60344"/>
    </ligand>
</feature>
<feature type="modified residue" description="Nitrated tyrosine" evidence="2">
    <location>
        <position position="24"/>
    </location>
</feature>
<feature type="modified residue" description="Nitrated tyrosine" evidence="2">
    <location>
        <position position="29"/>
    </location>
</feature>
<feature type="modified residue" description="Phosphoserine" evidence="5">
    <location>
        <position position="44"/>
    </location>
</feature>
<feature type="modified residue" description="Nitrated tyrosine" evidence="2">
    <location>
        <position position="134"/>
    </location>
</feature>
<name>LGB5_PEA</name>
<reference key="1">
    <citation type="journal article" date="2001" name="Plant Physiol.">
        <title>Two types of pea leghemoglobin genes showing different O2-binding affinities and distinct patterns of spatial expression in nodules.</title>
        <authorList>
            <person name="Kawashima K."/>
            <person name="Suganuma N."/>
            <person name="Tamaoki M."/>
            <person name="Kouchi H."/>
        </authorList>
    </citation>
    <scope>NUCLEOTIDE SEQUENCE [MRNA]</scope>
    <scope>TISSUE SPECIFICITY</scope>
    <scope>GENE FAMILY</scope>
    <scope>NOMENCLATURE</scope>
    <source>
        <strain>cv. Sparkle</strain>
        <tissue>Root nodule</tissue>
    </source>
</reference>
<reference key="2">
    <citation type="journal article" date="2001" name="J. Exp. Bot.">
        <title>Abscisic acid induces a decline in nitrogen fixation that involves leghaemoglobin, but is independent of sucrose synthase activity.</title>
        <authorList>
            <person name="Gonzalez E.M."/>
            <person name="Galvez L."/>
            <person name="Arrese-Igor C."/>
        </authorList>
    </citation>
    <scope>REPRESSION BY ABSCISIC ACID</scope>
    <source>
        <strain>cv. Sugar snap</strain>
    </source>
</reference>
<reference key="3">
    <citation type="journal article" date="2010" name="Plant Cell Environ.">
        <title>Ligands of boron in Pisum sativum nodules are involved in regulation of oxygen concentration and rhizobial infection.</title>
        <authorList>
            <person name="Reguera M."/>
            <person name="Wimmer M."/>
            <person name="Bustos P."/>
            <person name="Goldbach H.E."/>
            <person name="Bolanos L."/>
            <person name="Bonilla I."/>
        </authorList>
    </citation>
    <scope>INDUCTION BY BORON</scope>
    <source>
        <strain>cv. Lincoln</strain>
    </source>
</reference>
<organism>
    <name type="scientific">Pisum sativum</name>
    <name type="common">Garden pea</name>
    <name type="synonym">Lathyrus oleraceus</name>
    <dbReference type="NCBI Taxonomy" id="3888"/>
    <lineage>
        <taxon>Eukaryota</taxon>
        <taxon>Viridiplantae</taxon>
        <taxon>Streptophyta</taxon>
        <taxon>Embryophyta</taxon>
        <taxon>Tracheophyta</taxon>
        <taxon>Spermatophyta</taxon>
        <taxon>Magnoliopsida</taxon>
        <taxon>eudicotyledons</taxon>
        <taxon>Gunneridae</taxon>
        <taxon>Pentapetalae</taxon>
        <taxon>rosids</taxon>
        <taxon>fabids</taxon>
        <taxon>Fabales</taxon>
        <taxon>Fabaceae</taxon>
        <taxon>Papilionoideae</taxon>
        <taxon>50 kb inversion clade</taxon>
        <taxon>NPAAA clade</taxon>
        <taxon>Hologalegina</taxon>
        <taxon>IRL clade</taxon>
        <taxon>Fabeae</taxon>
        <taxon>Pisum</taxon>
    </lineage>
</organism>
<keyword id="KW-0963">Cytoplasm</keyword>
<keyword id="KW-0349">Heme</keyword>
<keyword id="KW-0408">Iron</keyword>
<keyword id="KW-0479">Metal-binding</keyword>
<keyword id="KW-0944">Nitration</keyword>
<keyword id="KW-0535">Nitrogen fixation</keyword>
<keyword id="KW-0536">Nodulation</keyword>
<keyword id="KW-0539">Nucleus</keyword>
<keyword id="KW-0561">Oxygen transport</keyword>
<keyword id="KW-0597">Phosphoprotein</keyword>
<keyword id="KW-0813">Transport</keyword>
<sequence length="146" mass="15860">MGFTDKQEALVNSSWELFKQNPGYSVLFYNIILKKAPATKGMFSFLKDSAGVVDSPKLQAHAEKVFGMVHDSAVQLRVSGEVVLGDATLGAIHIQKGVVDSHFVVVKEALLETIKEASGEKWSEELSTAWEVAYEGLASAIKKAMS</sequence>
<evidence type="ECO:0000250" key="1">
    <source>
        <dbReference type="UniProtKB" id="P02233"/>
    </source>
</evidence>
<evidence type="ECO:0000250" key="2">
    <source>
        <dbReference type="UniProtKB" id="P02234"/>
    </source>
</evidence>
<evidence type="ECO:0000250" key="3">
    <source>
        <dbReference type="UniProtKB" id="P02237"/>
    </source>
</evidence>
<evidence type="ECO:0000250" key="4">
    <source>
        <dbReference type="UniProtKB" id="P02240"/>
    </source>
</evidence>
<evidence type="ECO:0000250" key="5">
    <source>
        <dbReference type="UniProtKB" id="Q3C1F7"/>
    </source>
</evidence>
<evidence type="ECO:0000250" key="6">
    <source>
        <dbReference type="UniProtKB" id="Q43296"/>
    </source>
</evidence>
<evidence type="ECO:0000255" key="7">
    <source>
        <dbReference type="PROSITE-ProRule" id="PRU00238"/>
    </source>
</evidence>
<evidence type="ECO:0000269" key="8">
    <source>
    </source>
</evidence>
<evidence type="ECO:0000269" key="9">
    <source>
    </source>
</evidence>
<evidence type="ECO:0000269" key="10">
    <source>
    </source>
</evidence>
<evidence type="ECO:0000303" key="11">
    <source>
    </source>
</evidence>
<evidence type="ECO:0000305" key="12"/>
<protein>
    <recommendedName>
        <fullName evidence="11">Leghemoglobin Lb120-29</fullName>
        <shortName evidence="11">PsLb120-29</shortName>
    </recommendedName>
</protein>
<proteinExistence type="evidence at transcript level"/>